<reference key="1">
    <citation type="journal article" date="2001" name="Nucleic Acids Res.">
        <title>The complete genome sequence of the murine respiratory pathogen Mycoplasma pulmonis.</title>
        <authorList>
            <person name="Chambaud I."/>
            <person name="Heilig R."/>
            <person name="Ferris S."/>
            <person name="Barbe V."/>
            <person name="Samson D."/>
            <person name="Galisson F."/>
            <person name="Moszer I."/>
            <person name="Dybvig K."/>
            <person name="Wroblewski H."/>
            <person name="Viari A."/>
            <person name="Rocha E.P.C."/>
            <person name="Blanchard A."/>
        </authorList>
    </citation>
    <scope>NUCLEOTIDE SEQUENCE [LARGE SCALE GENOMIC DNA]</scope>
    <source>
        <strain>UAB CTIP</strain>
    </source>
</reference>
<sequence>MFYLIYKEKGISSFKAIKDFAWQNNIKKIGHSGTLDPEATGLLLLASDEDTKLLDYVDKKFKSYRATMILGLQSQSFDSQGKIINSSNLKVDNLTIEKTIKNFVGPFVQIPPIFSAKKINGKRAYEYARQGSEISMKAQEVFVKSIEIEKIDFPKVIFKAKVSRGTYIRSLINQIGLELKTYALMDDLERIELSGLSKNDLGVVSDLDIIDLEVLSLEKHEILTLAKGQKFSKDLADGKYAFIYKNTKKILGICKIESKIIAPIKIFNKKIEKSLKKDEKNE</sequence>
<comment type="function">
    <text evidence="1">Responsible for synthesis of pseudouridine from uracil-55 in the psi GC loop of transfer RNAs.</text>
</comment>
<comment type="catalytic activity">
    <reaction evidence="1">
        <text>uridine(55) in tRNA = pseudouridine(55) in tRNA</text>
        <dbReference type="Rhea" id="RHEA:42532"/>
        <dbReference type="Rhea" id="RHEA-COMP:10101"/>
        <dbReference type="Rhea" id="RHEA-COMP:10102"/>
        <dbReference type="ChEBI" id="CHEBI:65314"/>
        <dbReference type="ChEBI" id="CHEBI:65315"/>
        <dbReference type="EC" id="5.4.99.25"/>
    </reaction>
</comment>
<comment type="similarity">
    <text evidence="1">Belongs to the pseudouridine synthase TruB family. Type 1 subfamily.</text>
</comment>
<name>TRUB_MYCPU</name>
<gene>
    <name evidence="1" type="primary">truB</name>
    <name type="ordered locus">MYPU_5500</name>
</gene>
<accession>Q98Q19</accession>
<feature type="chain" id="PRO_0000121870" description="tRNA pseudouridine synthase B">
    <location>
        <begin position="1"/>
        <end position="282"/>
    </location>
</feature>
<feature type="active site" description="Nucleophile" evidence="1">
    <location>
        <position position="36"/>
    </location>
</feature>
<organism>
    <name type="scientific">Mycoplasmopsis pulmonis (strain UAB CTIP)</name>
    <name type="common">Mycoplasma pulmonis</name>
    <dbReference type="NCBI Taxonomy" id="272635"/>
    <lineage>
        <taxon>Bacteria</taxon>
        <taxon>Bacillati</taxon>
        <taxon>Mycoplasmatota</taxon>
        <taxon>Mycoplasmoidales</taxon>
        <taxon>Metamycoplasmataceae</taxon>
        <taxon>Mycoplasmopsis</taxon>
    </lineage>
</organism>
<dbReference type="EC" id="5.4.99.25" evidence="1"/>
<dbReference type="EMBL" id="AL445565">
    <property type="protein sequence ID" value="CAC13723.1"/>
    <property type="molecule type" value="Genomic_DNA"/>
</dbReference>
<dbReference type="PIR" id="F90580">
    <property type="entry name" value="F90580"/>
</dbReference>
<dbReference type="RefSeq" id="WP_010925351.1">
    <property type="nucleotide sequence ID" value="NC_002771.1"/>
</dbReference>
<dbReference type="SMR" id="Q98Q19"/>
<dbReference type="STRING" id="272635.gene:17577152"/>
<dbReference type="KEGG" id="mpu:MYPU_5500"/>
<dbReference type="eggNOG" id="COG0130">
    <property type="taxonomic scope" value="Bacteria"/>
</dbReference>
<dbReference type="HOGENOM" id="CLU_032087_0_2_14"/>
<dbReference type="BioCyc" id="MPUL272635:G1GT6-558-MONOMER"/>
<dbReference type="Proteomes" id="UP000000528">
    <property type="component" value="Chromosome"/>
</dbReference>
<dbReference type="GO" id="GO:0003723">
    <property type="term" value="F:RNA binding"/>
    <property type="evidence" value="ECO:0007669"/>
    <property type="project" value="InterPro"/>
</dbReference>
<dbReference type="GO" id="GO:0160148">
    <property type="term" value="F:tRNA pseudouridine(55) synthase activity"/>
    <property type="evidence" value="ECO:0007669"/>
    <property type="project" value="UniProtKB-EC"/>
</dbReference>
<dbReference type="GO" id="GO:1990481">
    <property type="term" value="P:mRNA pseudouridine synthesis"/>
    <property type="evidence" value="ECO:0007669"/>
    <property type="project" value="TreeGrafter"/>
</dbReference>
<dbReference type="GO" id="GO:0031119">
    <property type="term" value="P:tRNA pseudouridine synthesis"/>
    <property type="evidence" value="ECO:0007669"/>
    <property type="project" value="UniProtKB-UniRule"/>
</dbReference>
<dbReference type="CDD" id="cd02573">
    <property type="entry name" value="PseudoU_synth_EcTruB"/>
    <property type="match status" value="1"/>
</dbReference>
<dbReference type="Gene3D" id="3.30.2350.10">
    <property type="entry name" value="Pseudouridine synthase"/>
    <property type="match status" value="1"/>
</dbReference>
<dbReference type="HAMAP" id="MF_01080">
    <property type="entry name" value="TruB_bact"/>
    <property type="match status" value="1"/>
</dbReference>
<dbReference type="InterPro" id="IPR020103">
    <property type="entry name" value="PsdUridine_synth_cat_dom_sf"/>
</dbReference>
<dbReference type="InterPro" id="IPR002501">
    <property type="entry name" value="PsdUridine_synth_N"/>
</dbReference>
<dbReference type="InterPro" id="IPR014780">
    <property type="entry name" value="tRNA_psdUridine_synth_TruB"/>
</dbReference>
<dbReference type="NCBIfam" id="TIGR00431">
    <property type="entry name" value="TruB"/>
    <property type="match status" value="1"/>
</dbReference>
<dbReference type="PANTHER" id="PTHR13767:SF2">
    <property type="entry name" value="PSEUDOURIDYLATE SYNTHASE TRUB1"/>
    <property type="match status" value="1"/>
</dbReference>
<dbReference type="PANTHER" id="PTHR13767">
    <property type="entry name" value="TRNA-PSEUDOURIDINE SYNTHASE"/>
    <property type="match status" value="1"/>
</dbReference>
<dbReference type="Pfam" id="PF01509">
    <property type="entry name" value="TruB_N"/>
    <property type="match status" value="1"/>
</dbReference>
<dbReference type="SUPFAM" id="SSF55120">
    <property type="entry name" value="Pseudouridine synthase"/>
    <property type="match status" value="1"/>
</dbReference>
<protein>
    <recommendedName>
        <fullName evidence="1">tRNA pseudouridine synthase B</fullName>
        <ecNumber evidence="1">5.4.99.25</ecNumber>
    </recommendedName>
    <alternativeName>
        <fullName evidence="1">tRNA pseudouridine(55) synthase</fullName>
        <shortName evidence="1">Psi55 synthase</shortName>
    </alternativeName>
    <alternativeName>
        <fullName evidence="1">tRNA pseudouridylate synthase</fullName>
    </alternativeName>
    <alternativeName>
        <fullName evidence="1">tRNA-uridine isomerase</fullName>
    </alternativeName>
</protein>
<keyword id="KW-0413">Isomerase</keyword>
<keyword id="KW-1185">Reference proteome</keyword>
<keyword id="KW-0819">tRNA processing</keyword>
<evidence type="ECO:0000255" key="1">
    <source>
        <dbReference type="HAMAP-Rule" id="MF_01080"/>
    </source>
</evidence>
<proteinExistence type="inferred from homology"/>